<proteinExistence type="inferred from homology"/>
<keyword id="KW-0274">FAD</keyword>
<keyword id="KW-0285">Flavoprotein</keyword>
<keyword id="KW-0472">Membrane</keyword>
<keyword id="KW-0496">Mitochondrion</keyword>
<keyword id="KW-1000">Mitochondrion outer membrane</keyword>
<keyword id="KW-0520">NAD</keyword>
<keyword id="KW-0560">Oxidoreductase</keyword>
<keyword id="KW-1185">Reference proteome</keyword>
<keyword id="KW-0812">Transmembrane</keyword>
<keyword id="KW-1133">Transmembrane helix</keyword>
<comment type="function">
    <text evidence="1">May mediate the reduction of outer membrane cytochrome b5.</text>
</comment>
<comment type="catalytic activity">
    <reaction>
        <text>2 Fe(III)-[cytochrome b5] + NADH = 2 Fe(II)-[cytochrome b5] + NAD(+) + H(+)</text>
        <dbReference type="Rhea" id="RHEA:46680"/>
        <dbReference type="Rhea" id="RHEA-COMP:10438"/>
        <dbReference type="Rhea" id="RHEA-COMP:10439"/>
        <dbReference type="ChEBI" id="CHEBI:15378"/>
        <dbReference type="ChEBI" id="CHEBI:29033"/>
        <dbReference type="ChEBI" id="CHEBI:29034"/>
        <dbReference type="ChEBI" id="CHEBI:57540"/>
        <dbReference type="ChEBI" id="CHEBI:57945"/>
        <dbReference type="EC" id="1.6.2.2"/>
    </reaction>
</comment>
<comment type="cofactor">
    <cofactor evidence="1">
        <name>FAD</name>
        <dbReference type="ChEBI" id="CHEBI:57692"/>
    </cofactor>
</comment>
<comment type="subcellular location">
    <subcellularLocation>
        <location evidence="1">Mitochondrion outer membrane</location>
        <topology evidence="1">Single-pass membrane protein</topology>
    </subcellularLocation>
</comment>
<comment type="similarity">
    <text evidence="4">Belongs to the flavoprotein pyridine nucleotide cytochrome reductase family.</text>
</comment>
<organism>
    <name type="scientific">Candida glabrata (strain ATCC 2001 / BCRC 20586 / JCM 3761 / NBRC 0622 / NRRL Y-65 / CBS 138)</name>
    <name type="common">Yeast</name>
    <name type="synonym">Nakaseomyces glabratus</name>
    <dbReference type="NCBI Taxonomy" id="284593"/>
    <lineage>
        <taxon>Eukaryota</taxon>
        <taxon>Fungi</taxon>
        <taxon>Dikarya</taxon>
        <taxon>Ascomycota</taxon>
        <taxon>Saccharomycotina</taxon>
        <taxon>Saccharomycetes</taxon>
        <taxon>Saccharomycetales</taxon>
        <taxon>Saccharomycetaceae</taxon>
        <taxon>Nakaseomyces</taxon>
    </lineage>
</organism>
<protein>
    <recommendedName>
        <fullName>NADH-cytochrome b5 reductase 2</fullName>
        <ecNumber>1.6.2.2</ecNumber>
    </recommendedName>
    <alternativeName>
        <fullName>Mitochondrial cytochrome b reductase</fullName>
    </alternativeName>
</protein>
<feature type="chain" id="PRO_0000330177" description="NADH-cytochrome b5 reductase 2">
    <location>
        <begin position="1"/>
        <end position="298"/>
    </location>
</feature>
<feature type="transmembrane region" description="Helical" evidence="2">
    <location>
        <begin position="13"/>
        <end position="33"/>
    </location>
</feature>
<feature type="domain" description="FAD-binding FR-type" evidence="3">
    <location>
        <begin position="48"/>
        <end position="152"/>
    </location>
</feature>
<feature type="binding site" evidence="1">
    <location>
        <begin position="155"/>
        <end position="190"/>
    </location>
    <ligand>
        <name>FAD</name>
        <dbReference type="ChEBI" id="CHEBI:57692"/>
    </ligand>
</feature>
<reference key="1">
    <citation type="journal article" date="2004" name="Nature">
        <title>Genome evolution in yeasts.</title>
        <authorList>
            <person name="Dujon B."/>
            <person name="Sherman D."/>
            <person name="Fischer G."/>
            <person name="Durrens P."/>
            <person name="Casaregola S."/>
            <person name="Lafontaine I."/>
            <person name="de Montigny J."/>
            <person name="Marck C."/>
            <person name="Neuveglise C."/>
            <person name="Talla E."/>
            <person name="Goffard N."/>
            <person name="Frangeul L."/>
            <person name="Aigle M."/>
            <person name="Anthouard V."/>
            <person name="Babour A."/>
            <person name="Barbe V."/>
            <person name="Barnay S."/>
            <person name="Blanchin S."/>
            <person name="Beckerich J.-M."/>
            <person name="Beyne E."/>
            <person name="Bleykasten C."/>
            <person name="Boisrame A."/>
            <person name="Boyer J."/>
            <person name="Cattolico L."/>
            <person name="Confanioleri F."/>
            <person name="de Daruvar A."/>
            <person name="Despons L."/>
            <person name="Fabre E."/>
            <person name="Fairhead C."/>
            <person name="Ferry-Dumazet H."/>
            <person name="Groppi A."/>
            <person name="Hantraye F."/>
            <person name="Hennequin C."/>
            <person name="Jauniaux N."/>
            <person name="Joyet P."/>
            <person name="Kachouri R."/>
            <person name="Kerrest A."/>
            <person name="Koszul R."/>
            <person name="Lemaire M."/>
            <person name="Lesur I."/>
            <person name="Ma L."/>
            <person name="Muller H."/>
            <person name="Nicaud J.-M."/>
            <person name="Nikolski M."/>
            <person name="Oztas S."/>
            <person name="Ozier-Kalogeropoulos O."/>
            <person name="Pellenz S."/>
            <person name="Potier S."/>
            <person name="Richard G.-F."/>
            <person name="Straub M.-L."/>
            <person name="Suleau A."/>
            <person name="Swennen D."/>
            <person name="Tekaia F."/>
            <person name="Wesolowski-Louvel M."/>
            <person name="Westhof E."/>
            <person name="Wirth B."/>
            <person name="Zeniou-Meyer M."/>
            <person name="Zivanovic Y."/>
            <person name="Bolotin-Fukuhara M."/>
            <person name="Thierry A."/>
            <person name="Bouchier C."/>
            <person name="Caudron B."/>
            <person name="Scarpelli C."/>
            <person name="Gaillardin C."/>
            <person name="Weissenbach J."/>
            <person name="Wincker P."/>
            <person name="Souciet J.-L."/>
        </authorList>
    </citation>
    <scope>NUCLEOTIDE SEQUENCE [LARGE SCALE GENOMIC DNA]</scope>
    <source>
        <strain>ATCC 2001 / BCRC 20586 / JCM 3761 / NBRC 0622 / NRRL Y-65 / CBS 138</strain>
    </source>
</reference>
<name>MCR1_CANGA</name>
<sequence length="298" mass="33610">MAFARFARPTQRFLPFAIGAVAVTAGALYLNGWNTIKNENPKVFIGDRKWIDLELEKIIEESHDTKRFFFKLPTDDSVSGLTLASAVLTKFMTPKGNPVIRPYTPVSDLSEKGYIEFVIKHYEGGKMTDHLFQLKPKDTLAFQGPIPKWQWKPNSFDTITLLGGGTGITPLYQLVHHITQNKEDKTKINLFYGSKTPSDILLKKELDDLQKKYPEQLNIQYFVDKDDTGKFDGNKGFITKDFLAKNAPGPKEKTQVFVCGPPPFMDSLSGQKKSPMEQGDLTGALKDLGYSQDQVFKF</sequence>
<dbReference type="EC" id="1.6.2.2"/>
<dbReference type="EMBL" id="CR380951">
    <property type="protein sequence ID" value="CAG58888.1"/>
    <property type="molecule type" value="Genomic_DNA"/>
</dbReference>
<dbReference type="RefSeq" id="XP_445969.1">
    <property type="nucleotide sequence ID" value="XM_445969.1"/>
</dbReference>
<dbReference type="SMR" id="Q6FUX5"/>
<dbReference type="FunCoup" id="Q6FUX5">
    <property type="interactions" value="359"/>
</dbReference>
<dbReference type="STRING" id="284593.Q6FUX5"/>
<dbReference type="EnsemblFungi" id="CAGL0E06424g-T">
    <property type="protein sequence ID" value="CAGL0E06424g-T-p1"/>
    <property type="gene ID" value="CAGL0E06424g"/>
</dbReference>
<dbReference type="KEGG" id="cgr:2887376"/>
<dbReference type="CGD" id="CAL0128682">
    <property type="gene designation" value="CAGL0E06424g"/>
</dbReference>
<dbReference type="VEuPathDB" id="FungiDB:B1J91_E06424g"/>
<dbReference type="VEuPathDB" id="FungiDB:CAGL0E06424g"/>
<dbReference type="eggNOG" id="KOG0534">
    <property type="taxonomic scope" value="Eukaryota"/>
</dbReference>
<dbReference type="HOGENOM" id="CLU_003827_9_1_1"/>
<dbReference type="InParanoid" id="Q6FUX5"/>
<dbReference type="OMA" id="KGPEMQK"/>
<dbReference type="Proteomes" id="UP000002428">
    <property type="component" value="Chromosome E"/>
</dbReference>
<dbReference type="GO" id="GO:0062040">
    <property type="term" value="C:fungal biofilm matrix"/>
    <property type="evidence" value="ECO:0000314"/>
    <property type="project" value="CGD"/>
</dbReference>
<dbReference type="GO" id="GO:0005741">
    <property type="term" value="C:mitochondrial outer membrane"/>
    <property type="evidence" value="ECO:0007669"/>
    <property type="project" value="UniProtKB-SubCell"/>
</dbReference>
<dbReference type="GO" id="GO:0004128">
    <property type="term" value="F:cytochrome-b5 reductase activity, acting on NAD(P)H"/>
    <property type="evidence" value="ECO:0007669"/>
    <property type="project" value="UniProtKB-EC"/>
</dbReference>
<dbReference type="GO" id="GO:0006696">
    <property type="term" value="P:ergosterol biosynthetic process"/>
    <property type="evidence" value="ECO:0007669"/>
    <property type="project" value="TreeGrafter"/>
</dbReference>
<dbReference type="CDD" id="cd06183">
    <property type="entry name" value="cyt_b5_reduct_like"/>
    <property type="match status" value="1"/>
</dbReference>
<dbReference type="FunFam" id="2.40.30.10:FF:000032">
    <property type="entry name" value="NADH-cytochrome b5 reductase"/>
    <property type="match status" value="1"/>
</dbReference>
<dbReference type="FunFam" id="3.40.50.80:FF:000009">
    <property type="entry name" value="NADH-cytochrome b5 reductase"/>
    <property type="match status" value="1"/>
</dbReference>
<dbReference type="Gene3D" id="3.40.50.80">
    <property type="entry name" value="Nucleotide-binding domain of ferredoxin-NADP reductase (FNR) module"/>
    <property type="match status" value="1"/>
</dbReference>
<dbReference type="Gene3D" id="2.40.30.10">
    <property type="entry name" value="Translation factors"/>
    <property type="match status" value="1"/>
</dbReference>
<dbReference type="InterPro" id="IPR001834">
    <property type="entry name" value="CBR-like"/>
</dbReference>
<dbReference type="InterPro" id="IPR008333">
    <property type="entry name" value="Cbr1-like_FAD-bd_dom"/>
</dbReference>
<dbReference type="InterPro" id="IPR017927">
    <property type="entry name" value="FAD-bd_FR_type"/>
</dbReference>
<dbReference type="InterPro" id="IPR001709">
    <property type="entry name" value="Flavoprot_Pyr_Nucl_cyt_Rdtase"/>
</dbReference>
<dbReference type="InterPro" id="IPR039261">
    <property type="entry name" value="FNR_nucleotide-bd"/>
</dbReference>
<dbReference type="InterPro" id="IPR001433">
    <property type="entry name" value="OxRdtase_FAD/NAD-bd"/>
</dbReference>
<dbReference type="InterPro" id="IPR017938">
    <property type="entry name" value="Riboflavin_synthase-like_b-brl"/>
</dbReference>
<dbReference type="PANTHER" id="PTHR19370">
    <property type="entry name" value="NADH-CYTOCHROME B5 REDUCTASE"/>
    <property type="match status" value="1"/>
</dbReference>
<dbReference type="PANTHER" id="PTHR19370:SF171">
    <property type="entry name" value="NADH-CYTOCHROME B5 REDUCTASE 2"/>
    <property type="match status" value="1"/>
</dbReference>
<dbReference type="Pfam" id="PF00970">
    <property type="entry name" value="FAD_binding_6"/>
    <property type="match status" value="1"/>
</dbReference>
<dbReference type="Pfam" id="PF00175">
    <property type="entry name" value="NAD_binding_1"/>
    <property type="match status" value="1"/>
</dbReference>
<dbReference type="PRINTS" id="PR00406">
    <property type="entry name" value="CYTB5RDTASE"/>
</dbReference>
<dbReference type="PRINTS" id="PR00371">
    <property type="entry name" value="FPNCR"/>
</dbReference>
<dbReference type="SUPFAM" id="SSF52343">
    <property type="entry name" value="Ferredoxin reductase-like, C-terminal NADP-linked domain"/>
    <property type="match status" value="1"/>
</dbReference>
<dbReference type="SUPFAM" id="SSF63380">
    <property type="entry name" value="Riboflavin synthase domain-like"/>
    <property type="match status" value="1"/>
</dbReference>
<dbReference type="PROSITE" id="PS51384">
    <property type="entry name" value="FAD_FR"/>
    <property type="match status" value="1"/>
</dbReference>
<gene>
    <name type="primary">MCR1</name>
    <name type="ordered locus">CAGL0E06424g</name>
</gene>
<evidence type="ECO:0000250" key="1"/>
<evidence type="ECO:0000255" key="2"/>
<evidence type="ECO:0000255" key="3">
    <source>
        <dbReference type="PROSITE-ProRule" id="PRU00716"/>
    </source>
</evidence>
<evidence type="ECO:0000305" key="4"/>
<accession>Q6FUX5</accession>